<comment type="subunit">
    <text evidence="4">Interacts with PNN.</text>
</comment>
<comment type="subcellular location">
    <subcellularLocation>
        <location evidence="4">Nucleus speckle</location>
    </subcellularLocation>
</comment>
<comment type="alternative products">
    <event type="alternative splicing"/>
    <isoform>
        <id>Q8TF01-1</id>
        <name>1</name>
        <sequence type="displayed"/>
    </isoform>
    <isoform>
        <id>Q8TF01-2</id>
        <name>2</name>
        <sequence type="described" ref="VSP_014458 VSP_014459"/>
    </isoform>
</comment>
<comment type="tissue specificity">
    <text evidence="4">Expressed in heart, skeletal muscle, thymus, spleen, kidney, liver, placenta and leukocytes.</text>
</comment>
<comment type="similarity">
    <text evidence="6">Belongs to the splicing factor SR family.</text>
</comment>
<comment type="sequence caution" evidence="6">
    <conflict type="miscellaneous discrepancy">
        <sequence resource="EMBL-CDS" id="AAH07791"/>
    </conflict>
    <text>Contaminating sequence. Potential poly-A sequence.</text>
</comment>
<comment type="sequence caution" evidence="6">
    <conflict type="miscellaneous discrepancy">
        <sequence resource="EMBL-CDS" id="AAH19074"/>
    </conflict>
    <text>Contaminating sequence. Potential poly-A sequence.</text>
</comment>
<comment type="sequence caution" evidence="6">
    <conflict type="miscellaneous discrepancy">
        <sequence resource="EMBL-CDS" id="AAH52638"/>
    </conflict>
    <text>Contaminating sequence. Potential poly-A sequence.</text>
</comment>
<comment type="sequence caution" evidence="6">
    <conflict type="frameshift">
        <sequence resource="EMBL-CDS" id="AAH64413"/>
    </conflict>
</comment>
<comment type="sequence caution" evidence="6">
    <conflict type="miscellaneous discrepancy">
        <sequence resource="EMBL-CDS" id="AAH64640"/>
    </conflict>
    <text>Contaminating sequence. Potential poly-A sequence.</text>
</comment>
<gene>
    <name type="primary">PNISR</name>
    <name type="synonym">C6orf111</name>
    <name type="synonym">SFRS18</name>
    <name type="synonym">SRRP130</name>
    <name type="ORF">HSPC261</name>
    <name type="ORF">HSPC306</name>
</gene>
<name>PNISR_HUMAN</name>
<reference key="1">
    <citation type="journal article" date="2003" name="Invest. Ophthalmol. Vis. Sci.">
        <title>Pinin/DRS/memA interacts with SRp75, SRm300 and SRrp130 in corneal epithelial cells.</title>
        <authorList>
            <person name="Zimowska G."/>
            <person name="Shi J."/>
            <person name="Munguba G."/>
            <person name="Jackson M.R."/>
            <person name="Alpatov R."/>
            <person name="Simmons M.N."/>
            <person name="Shi Y."/>
            <person name="Sugrue S.P."/>
        </authorList>
    </citation>
    <scope>NUCLEOTIDE SEQUENCE [MRNA] (ISOFORM 1)</scope>
    <scope>INTERACTION WITH PNN</scope>
    <scope>SUBCELLULAR LOCATION</scope>
    <scope>TISSUE SPECIFICITY</scope>
    <source>
        <tissue>Kidney</tissue>
    </source>
</reference>
<reference key="2">
    <citation type="journal article" date="2004" name="Nat. Genet.">
        <title>Complete sequencing and characterization of 21,243 full-length human cDNAs.</title>
        <authorList>
            <person name="Ota T."/>
            <person name="Suzuki Y."/>
            <person name="Nishikawa T."/>
            <person name="Otsuki T."/>
            <person name="Sugiyama T."/>
            <person name="Irie R."/>
            <person name="Wakamatsu A."/>
            <person name="Hayashi K."/>
            <person name="Sato H."/>
            <person name="Nagai K."/>
            <person name="Kimura K."/>
            <person name="Makita H."/>
            <person name="Sekine M."/>
            <person name="Obayashi M."/>
            <person name="Nishi T."/>
            <person name="Shibahara T."/>
            <person name="Tanaka T."/>
            <person name="Ishii S."/>
            <person name="Yamamoto J."/>
            <person name="Saito K."/>
            <person name="Kawai Y."/>
            <person name="Isono Y."/>
            <person name="Nakamura Y."/>
            <person name="Nagahari K."/>
            <person name="Murakami K."/>
            <person name="Yasuda T."/>
            <person name="Iwayanagi T."/>
            <person name="Wagatsuma M."/>
            <person name="Shiratori A."/>
            <person name="Sudo H."/>
            <person name="Hosoiri T."/>
            <person name="Kaku Y."/>
            <person name="Kodaira H."/>
            <person name="Kondo H."/>
            <person name="Sugawara M."/>
            <person name="Takahashi M."/>
            <person name="Kanda K."/>
            <person name="Yokoi T."/>
            <person name="Furuya T."/>
            <person name="Kikkawa E."/>
            <person name="Omura Y."/>
            <person name="Abe K."/>
            <person name="Kamihara K."/>
            <person name="Katsuta N."/>
            <person name="Sato K."/>
            <person name="Tanikawa M."/>
            <person name="Yamazaki M."/>
            <person name="Ninomiya K."/>
            <person name="Ishibashi T."/>
            <person name="Yamashita H."/>
            <person name="Murakawa K."/>
            <person name="Fujimori K."/>
            <person name="Tanai H."/>
            <person name="Kimata M."/>
            <person name="Watanabe M."/>
            <person name="Hiraoka S."/>
            <person name="Chiba Y."/>
            <person name="Ishida S."/>
            <person name="Ono Y."/>
            <person name="Takiguchi S."/>
            <person name="Watanabe S."/>
            <person name="Yosida M."/>
            <person name="Hotuta T."/>
            <person name="Kusano J."/>
            <person name="Kanehori K."/>
            <person name="Takahashi-Fujii A."/>
            <person name="Hara H."/>
            <person name="Tanase T.-O."/>
            <person name="Nomura Y."/>
            <person name="Togiya S."/>
            <person name="Komai F."/>
            <person name="Hara R."/>
            <person name="Takeuchi K."/>
            <person name="Arita M."/>
            <person name="Imose N."/>
            <person name="Musashino K."/>
            <person name="Yuuki H."/>
            <person name="Oshima A."/>
            <person name="Sasaki N."/>
            <person name="Aotsuka S."/>
            <person name="Yoshikawa Y."/>
            <person name="Matsunawa H."/>
            <person name="Ichihara T."/>
            <person name="Shiohata N."/>
            <person name="Sano S."/>
            <person name="Moriya S."/>
            <person name="Momiyama H."/>
            <person name="Satoh N."/>
            <person name="Takami S."/>
            <person name="Terashima Y."/>
            <person name="Suzuki O."/>
            <person name="Nakagawa S."/>
            <person name="Senoh A."/>
            <person name="Mizoguchi H."/>
            <person name="Goto Y."/>
            <person name="Shimizu F."/>
            <person name="Wakebe H."/>
            <person name="Hishigaki H."/>
            <person name="Watanabe T."/>
            <person name="Sugiyama A."/>
            <person name="Takemoto M."/>
            <person name="Kawakami B."/>
            <person name="Yamazaki M."/>
            <person name="Watanabe K."/>
            <person name="Kumagai A."/>
            <person name="Itakura S."/>
            <person name="Fukuzumi Y."/>
            <person name="Fujimori Y."/>
            <person name="Komiyama M."/>
            <person name="Tashiro H."/>
            <person name="Tanigami A."/>
            <person name="Fujiwara T."/>
            <person name="Ono T."/>
            <person name="Yamada K."/>
            <person name="Fujii Y."/>
            <person name="Ozaki K."/>
            <person name="Hirao M."/>
            <person name="Ohmori Y."/>
            <person name="Kawabata A."/>
            <person name="Hikiji T."/>
            <person name="Kobatake N."/>
            <person name="Inagaki H."/>
            <person name="Ikema Y."/>
            <person name="Okamoto S."/>
            <person name="Okitani R."/>
            <person name="Kawakami T."/>
            <person name="Noguchi S."/>
            <person name="Itoh T."/>
            <person name="Shigeta K."/>
            <person name="Senba T."/>
            <person name="Matsumura K."/>
            <person name="Nakajima Y."/>
            <person name="Mizuno T."/>
            <person name="Morinaga M."/>
            <person name="Sasaki M."/>
            <person name="Togashi T."/>
            <person name="Oyama M."/>
            <person name="Hata H."/>
            <person name="Watanabe M."/>
            <person name="Komatsu T."/>
            <person name="Mizushima-Sugano J."/>
            <person name="Satoh T."/>
            <person name="Shirai Y."/>
            <person name="Takahashi Y."/>
            <person name="Nakagawa K."/>
            <person name="Okumura K."/>
            <person name="Nagase T."/>
            <person name="Nomura N."/>
            <person name="Kikuchi H."/>
            <person name="Masuho Y."/>
            <person name="Yamashita R."/>
            <person name="Nakai K."/>
            <person name="Yada T."/>
            <person name="Nakamura Y."/>
            <person name="Ohara O."/>
            <person name="Isogai T."/>
            <person name="Sugano S."/>
        </authorList>
    </citation>
    <scope>NUCLEOTIDE SEQUENCE [LARGE SCALE MRNA] (ISOFORMS 1 AND 2)</scope>
    <source>
        <tissue>Embryo</tissue>
    </source>
</reference>
<reference key="3">
    <citation type="journal article" date="2003" name="Nature">
        <title>The DNA sequence and analysis of human chromosome 6.</title>
        <authorList>
            <person name="Mungall A.J."/>
            <person name="Palmer S.A."/>
            <person name="Sims S.K."/>
            <person name="Edwards C.A."/>
            <person name="Ashurst J.L."/>
            <person name="Wilming L."/>
            <person name="Jones M.C."/>
            <person name="Horton R."/>
            <person name="Hunt S.E."/>
            <person name="Scott C.E."/>
            <person name="Gilbert J.G.R."/>
            <person name="Clamp M.E."/>
            <person name="Bethel G."/>
            <person name="Milne S."/>
            <person name="Ainscough R."/>
            <person name="Almeida J.P."/>
            <person name="Ambrose K.D."/>
            <person name="Andrews T.D."/>
            <person name="Ashwell R.I.S."/>
            <person name="Babbage A.K."/>
            <person name="Bagguley C.L."/>
            <person name="Bailey J."/>
            <person name="Banerjee R."/>
            <person name="Barker D.J."/>
            <person name="Barlow K.F."/>
            <person name="Bates K."/>
            <person name="Beare D.M."/>
            <person name="Beasley H."/>
            <person name="Beasley O."/>
            <person name="Bird C.P."/>
            <person name="Blakey S.E."/>
            <person name="Bray-Allen S."/>
            <person name="Brook J."/>
            <person name="Brown A.J."/>
            <person name="Brown J.Y."/>
            <person name="Burford D.C."/>
            <person name="Burrill W."/>
            <person name="Burton J."/>
            <person name="Carder C."/>
            <person name="Carter N.P."/>
            <person name="Chapman J.C."/>
            <person name="Clark S.Y."/>
            <person name="Clark G."/>
            <person name="Clee C.M."/>
            <person name="Clegg S."/>
            <person name="Cobley V."/>
            <person name="Collier R.E."/>
            <person name="Collins J.E."/>
            <person name="Colman L.K."/>
            <person name="Corby N.R."/>
            <person name="Coville G.J."/>
            <person name="Culley K.M."/>
            <person name="Dhami P."/>
            <person name="Davies J."/>
            <person name="Dunn M."/>
            <person name="Earthrowl M.E."/>
            <person name="Ellington A.E."/>
            <person name="Evans K.A."/>
            <person name="Faulkner L."/>
            <person name="Francis M.D."/>
            <person name="Frankish A."/>
            <person name="Frankland J."/>
            <person name="French L."/>
            <person name="Garner P."/>
            <person name="Garnett J."/>
            <person name="Ghori M.J."/>
            <person name="Gilby L.M."/>
            <person name="Gillson C.J."/>
            <person name="Glithero R.J."/>
            <person name="Grafham D.V."/>
            <person name="Grant M."/>
            <person name="Gribble S."/>
            <person name="Griffiths C."/>
            <person name="Griffiths M.N.D."/>
            <person name="Hall R."/>
            <person name="Halls K.S."/>
            <person name="Hammond S."/>
            <person name="Harley J.L."/>
            <person name="Hart E.A."/>
            <person name="Heath P.D."/>
            <person name="Heathcott R."/>
            <person name="Holmes S.J."/>
            <person name="Howden P.J."/>
            <person name="Howe K.L."/>
            <person name="Howell G.R."/>
            <person name="Huckle E."/>
            <person name="Humphray S.J."/>
            <person name="Humphries M.D."/>
            <person name="Hunt A.R."/>
            <person name="Johnson C.M."/>
            <person name="Joy A.A."/>
            <person name="Kay M."/>
            <person name="Keenan S.J."/>
            <person name="Kimberley A.M."/>
            <person name="King A."/>
            <person name="Laird G.K."/>
            <person name="Langford C."/>
            <person name="Lawlor S."/>
            <person name="Leongamornlert D.A."/>
            <person name="Leversha M."/>
            <person name="Lloyd C.R."/>
            <person name="Lloyd D.M."/>
            <person name="Loveland J.E."/>
            <person name="Lovell J."/>
            <person name="Martin S."/>
            <person name="Mashreghi-Mohammadi M."/>
            <person name="Maslen G.L."/>
            <person name="Matthews L."/>
            <person name="McCann O.T."/>
            <person name="McLaren S.J."/>
            <person name="McLay K."/>
            <person name="McMurray A."/>
            <person name="Moore M.J.F."/>
            <person name="Mullikin J.C."/>
            <person name="Niblett D."/>
            <person name="Nickerson T."/>
            <person name="Novik K.L."/>
            <person name="Oliver K."/>
            <person name="Overton-Larty E.K."/>
            <person name="Parker A."/>
            <person name="Patel R."/>
            <person name="Pearce A.V."/>
            <person name="Peck A.I."/>
            <person name="Phillimore B.J.C.T."/>
            <person name="Phillips S."/>
            <person name="Plumb R.W."/>
            <person name="Porter K.M."/>
            <person name="Ramsey Y."/>
            <person name="Ranby S.A."/>
            <person name="Rice C.M."/>
            <person name="Ross M.T."/>
            <person name="Searle S.M."/>
            <person name="Sehra H.K."/>
            <person name="Sheridan E."/>
            <person name="Skuce C.D."/>
            <person name="Smith S."/>
            <person name="Smith M."/>
            <person name="Spraggon L."/>
            <person name="Squares S.L."/>
            <person name="Steward C.A."/>
            <person name="Sycamore N."/>
            <person name="Tamlyn-Hall G."/>
            <person name="Tester J."/>
            <person name="Theaker A.J."/>
            <person name="Thomas D.W."/>
            <person name="Thorpe A."/>
            <person name="Tracey A."/>
            <person name="Tromans A."/>
            <person name="Tubby B."/>
            <person name="Wall M."/>
            <person name="Wallis J.M."/>
            <person name="West A.P."/>
            <person name="White S.S."/>
            <person name="Whitehead S.L."/>
            <person name="Whittaker H."/>
            <person name="Wild A."/>
            <person name="Willey D.J."/>
            <person name="Wilmer T.E."/>
            <person name="Wood J.M."/>
            <person name="Wray P.W."/>
            <person name="Wyatt J.C."/>
            <person name="Young L."/>
            <person name="Younger R.M."/>
            <person name="Bentley D.R."/>
            <person name="Coulson A."/>
            <person name="Durbin R.M."/>
            <person name="Hubbard T."/>
            <person name="Sulston J.E."/>
            <person name="Dunham I."/>
            <person name="Rogers J."/>
            <person name="Beck S."/>
        </authorList>
    </citation>
    <scope>NUCLEOTIDE SEQUENCE [LARGE SCALE GENOMIC DNA]</scope>
</reference>
<reference key="4">
    <citation type="submission" date="2005-09" db="EMBL/GenBank/DDBJ databases">
        <authorList>
            <person name="Mural R.J."/>
            <person name="Istrail S."/>
            <person name="Sutton G.G."/>
            <person name="Florea L."/>
            <person name="Halpern A.L."/>
            <person name="Mobarry C.M."/>
            <person name="Lippert R."/>
            <person name="Walenz B."/>
            <person name="Shatkay H."/>
            <person name="Dew I."/>
            <person name="Miller J.R."/>
            <person name="Flanigan M.J."/>
            <person name="Edwards N.J."/>
            <person name="Bolanos R."/>
            <person name="Fasulo D."/>
            <person name="Halldorsson B.V."/>
            <person name="Hannenhalli S."/>
            <person name="Turner R."/>
            <person name="Yooseph S."/>
            <person name="Lu F."/>
            <person name="Nusskern D.R."/>
            <person name="Shue B.C."/>
            <person name="Zheng X.H."/>
            <person name="Zhong F."/>
            <person name="Delcher A.L."/>
            <person name="Huson D.H."/>
            <person name="Kravitz S.A."/>
            <person name="Mouchard L."/>
            <person name="Reinert K."/>
            <person name="Remington K.A."/>
            <person name="Clark A.G."/>
            <person name="Waterman M.S."/>
            <person name="Eichler E.E."/>
            <person name="Adams M.D."/>
            <person name="Hunkapiller M.W."/>
            <person name="Myers E.W."/>
            <person name="Venter J.C."/>
        </authorList>
    </citation>
    <scope>NUCLEOTIDE SEQUENCE [LARGE SCALE GENOMIC DNA]</scope>
</reference>
<reference key="5">
    <citation type="journal article" date="2004" name="Genome Res.">
        <title>The status, quality, and expansion of the NIH full-length cDNA project: the Mammalian Gene Collection (MGC).</title>
        <authorList>
            <consortium name="The MGC Project Team"/>
        </authorList>
    </citation>
    <scope>NUCLEOTIDE SEQUENCE [LARGE SCALE MRNA] OF 1-497 (ISOFORM 1)</scope>
    <source>
        <tissue>Blood</tissue>
        <tissue>Pancreas</tissue>
        <tissue>Placenta</tissue>
        <tissue>Skin</tissue>
    </source>
</reference>
<reference key="6">
    <citation type="submission" date="1999-05" db="EMBL/GenBank/DDBJ databases">
        <title>Human partial CDS from CD34+ stem cells.</title>
        <authorList>
            <person name="Ye M."/>
            <person name="Zhang Q.-H."/>
            <person name="Zhou J."/>
            <person name="Shen Y."/>
            <person name="Wu X.-Y."/>
            <person name="Guan Z.Q."/>
            <person name="Wang L."/>
            <person name="Fan H.-Y."/>
            <person name="Mao Y.-F."/>
            <person name="Dai M."/>
            <person name="Huang Q.-H."/>
            <person name="Chen S.-J."/>
            <person name="Chen Z."/>
        </authorList>
    </citation>
    <scope>NUCLEOTIDE SEQUENCE [LARGE SCALE MRNA] OF 238-499 AND 661-805</scope>
    <source>
        <tissue>Umbilical cord blood</tissue>
    </source>
</reference>
<reference key="7">
    <citation type="journal article" date="2007" name="BMC Genomics">
        <title>The full-ORF clone resource of the German cDNA consortium.</title>
        <authorList>
            <person name="Bechtel S."/>
            <person name="Rosenfelder H."/>
            <person name="Duda A."/>
            <person name="Schmidt C.P."/>
            <person name="Ernst U."/>
            <person name="Wellenreuther R."/>
            <person name="Mehrle A."/>
            <person name="Schuster C."/>
            <person name="Bahr A."/>
            <person name="Bloecker H."/>
            <person name="Heubner D."/>
            <person name="Hoerlein A."/>
            <person name="Michel G."/>
            <person name="Wedler H."/>
            <person name="Koehrer K."/>
            <person name="Ottenwaelder B."/>
            <person name="Poustka A."/>
            <person name="Wiemann S."/>
            <person name="Schupp I."/>
        </authorList>
    </citation>
    <scope>NUCLEOTIDE SEQUENCE [LARGE SCALE MRNA] OF 507-805</scope>
    <source>
        <tissue>Brain</tissue>
    </source>
</reference>
<reference key="8">
    <citation type="journal article" date="2006" name="Cell">
        <title>Global, in vivo, and site-specific phosphorylation dynamics in signaling networks.</title>
        <authorList>
            <person name="Olsen J.V."/>
            <person name="Blagoev B."/>
            <person name="Gnad F."/>
            <person name="Macek B."/>
            <person name="Kumar C."/>
            <person name="Mortensen P."/>
            <person name="Mann M."/>
        </authorList>
    </citation>
    <scope>PHOSPHORYLATION [LARGE SCALE ANALYSIS] AT SER-211</scope>
    <scope>IDENTIFICATION BY MASS SPECTROMETRY [LARGE SCALE ANALYSIS]</scope>
    <source>
        <tissue>Cervix carcinoma</tissue>
    </source>
</reference>
<reference key="9">
    <citation type="journal article" date="2008" name="Proc. Natl. Acad. Sci. U.S.A.">
        <title>A quantitative atlas of mitotic phosphorylation.</title>
        <authorList>
            <person name="Dephoure N."/>
            <person name="Zhou C."/>
            <person name="Villen J."/>
            <person name="Beausoleil S.A."/>
            <person name="Bakalarski C.E."/>
            <person name="Elledge S.J."/>
            <person name="Gygi S.P."/>
        </authorList>
    </citation>
    <scope>PHOSPHORYLATION [LARGE SCALE ANALYSIS] AT SER-290</scope>
    <scope>IDENTIFICATION BY MASS SPECTROMETRY [LARGE SCALE ANALYSIS]</scope>
    <source>
        <tissue>Cervix carcinoma</tissue>
    </source>
</reference>
<reference key="10">
    <citation type="journal article" date="2009" name="Anal. Chem.">
        <title>Lys-N and trypsin cover complementary parts of the phosphoproteome in a refined SCX-based approach.</title>
        <authorList>
            <person name="Gauci S."/>
            <person name="Helbig A.O."/>
            <person name="Slijper M."/>
            <person name="Krijgsveld J."/>
            <person name="Heck A.J."/>
            <person name="Mohammed S."/>
        </authorList>
    </citation>
    <scope>IDENTIFICATION BY MASS SPECTROMETRY [LARGE SCALE ANALYSIS]</scope>
</reference>
<reference key="11">
    <citation type="journal article" date="2009" name="Sci. Signal.">
        <title>Quantitative phosphoproteomic analysis of T cell receptor signaling reveals system-wide modulation of protein-protein interactions.</title>
        <authorList>
            <person name="Mayya V."/>
            <person name="Lundgren D.H."/>
            <person name="Hwang S.-I."/>
            <person name="Rezaul K."/>
            <person name="Wu L."/>
            <person name="Eng J.K."/>
            <person name="Rodionov V."/>
            <person name="Han D.K."/>
        </authorList>
    </citation>
    <scope>IDENTIFICATION BY MASS SPECTROMETRY [LARGE SCALE ANALYSIS]</scope>
    <source>
        <tissue>Leukemic T-cell</tissue>
    </source>
</reference>
<reference key="12">
    <citation type="journal article" date="2010" name="Sci. Signal.">
        <title>Quantitative phosphoproteomics reveals widespread full phosphorylation site occupancy during mitosis.</title>
        <authorList>
            <person name="Olsen J.V."/>
            <person name="Vermeulen M."/>
            <person name="Santamaria A."/>
            <person name="Kumar C."/>
            <person name="Miller M.L."/>
            <person name="Jensen L.J."/>
            <person name="Gnad F."/>
            <person name="Cox J."/>
            <person name="Jensen T.S."/>
            <person name="Nigg E.A."/>
            <person name="Brunak S."/>
            <person name="Mann M."/>
        </authorList>
    </citation>
    <scope>IDENTIFICATION BY MASS SPECTROMETRY [LARGE SCALE ANALYSIS]</scope>
    <source>
        <tissue>Cervix carcinoma</tissue>
    </source>
</reference>
<reference key="13">
    <citation type="journal article" date="2011" name="Sci. Signal.">
        <title>System-wide temporal characterization of the proteome and phosphoproteome of human embryonic stem cell differentiation.</title>
        <authorList>
            <person name="Rigbolt K.T."/>
            <person name="Prokhorova T.A."/>
            <person name="Akimov V."/>
            <person name="Henningsen J."/>
            <person name="Johansen P.T."/>
            <person name="Kratchmarova I."/>
            <person name="Kassem M."/>
            <person name="Mann M."/>
            <person name="Olsen J.V."/>
            <person name="Blagoev B."/>
        </authorList>
    </citation>
    <scope>PHOSPHORYLATION [LARGE SCALE ANALYSIS] AT SER-211; SER-290; SER-313; SER-321 AND SER-726</scope>
    <scope>IDENTIFICATION BY MASS SPECTROMETRY [LARGE SCALE ANALYSIS]</scope>
</reference>
<reference key="14">
    <citation type="journal article" date="2013" name="J. Proteome Res.">
        <title>Toward a comprehensive characterization of a human cancer cell phosphoproteome.</title>
        <authorList>
            <person name="Zhou H."/>
            <person name="Di Palma S."/>
            <person name="Preisinger C."/>
            <person name="Peng M."/>
            <person name="Polat A.N."/>
            <person name="Heck A.J."/>
            <person name="Mohammed S."/>
        </authorList>
    </citation>
    <scope>PHOSPHORYLATION [LARGE SCALE ANALYSIS] AT SER-204; SER-211; SER-290; SER-465; SER-467 AND THR-485</scope>
    <scope>IDENTIFICATION BY MASS SPECTROMETRY [LARGE SCALE ANALYSIS]</scope>
    <source>
        <tissue>Cervix carcinoma</tissue>
        <tissue>Erythroleukemia</tissue>
    </source>
</reference>
<reference key="15">
    <citation type="journal article" date="2014" name="Nat. Struct. Mol. Biol.">
        <title>Uncovering global SUMOylation signaling networks in a site-specific manner.</title>
        <authorList>
            <person name="Hendriks I.A."/>
            <person name="D'Souza R.C."/>
            <person name="Yang B."/>
            <person name="Verlaan-de Vries M."/>
            <person name="Mann M."/>
            <person name="Vertegaal A.C."/>
        </authorList>
    </citation>
    <scope>SUMOYLATION [LARGE SCALE ANALYSIS] AT LYS-218</scope>
    <scope>IDENTIFICATION BY MASS SPECTROMETRY [LARGE SCALE ANALYSIS]</scope>
</reference>
<reference key="16">
    <citation type="journal article" date="2017" name="Nat. Struct. Mol. Biol.">
        <title>Site-specific mapping of the human SUMO proteome reveals co-modification with phosphorylation.</title>
        <authorList>
            <person name="Hendriks I.A."/>
            <person name="Lyon D."/>
            <person name="Young C."/>
            <person name="Jensen L.J."/>
            <person name="Vertegaal A.C."/>
            <person name="Nielsen M.L."/>
        </authorList>
    </citation>
    <scope>SUMOYLATION [LARGE SCALE ANALYSIS] AT LYS-218; LYS-496 AND LYS-703</scope>
    <scope>IDENTIFICATION BY MASS SPECTROMETRY [LARGE SCALE ANALYSIS]</scope>
</reference>
<protein>
    <recommendedName>
        <fullName>Arginine/serine-rich protein PNISR</fullName>
    </recommendedName>
    <alternativeName>
        <fullName>PNN-interacting serine/arginine-rich protein</fullName>
    </alternativeName>
    <alternativeName>
        <fullName>SR-related protein</fullName>
    </alternativeName>
    <alternativeName>
        <fullName>SR-rich protein</fullName>
    </alternativeName>
    <alternativeName>
        <fullName>Serine/arginine-rich-splicing regulatory protein 130</fullName>
        <shortName>SRrp130</shortName>
    </alternativeName>
    <alternativeName>
        <fullName>Splicing factor, arginine/serine-rich 130</fullName>
    </alternativeName>
    <alternativeName>
        <fullName>Splicing factor, arginine/serine-rich 18</fullName>
    </alternativeName>
</protein>
<dbReference type="EMBL" id="AF314184">
    <property type="protein sequence ID" value="AAL76163.1"/>
    <property type="molecule type" value="mRNA"/>
</dbReference>
<dbReference type="EMBL" id="AF314185">
    <property type="protein sequence ID" value="AAL76164.1"/>
    <property type="molecule type" value="mRNA"/>
</dbReference>
<dbReference type="EMBL" id="AK027658">
    <property type="protein sequence ID" value="BAB55273.1"/>
    <property type="molecule type" value="mRNA"/>
</dbReference>
<dbReference type="EMBL" id="AK027759">
    <property type="protein sequence ID" value="BAB55350.1"/>
    <property type="molecule type" value="mRNA"/>
</dbReference>
<dbReference type="EMBL" id="AK027898">
    <property type="protein sequence ID" value="BAB55440.1"/>
    <property type="molecule type" value="mRNA"/>
</dbReference>
<dbReference type="EMBL" id="AK074628">
    <property type="protein sequence ID" value="BAC11098.1"/>
    <property type="status" value="ALT_TERM"/>
    <property type="molecule type" value="mRNA"/>
</dbReference>
<dbReference type="EMBL" id="AK291155">
    <property type="protein sequence ID" value="BAF83844.1"/>
    <property type="molecule type" value="mRNA"/>
</dbReference>
<dbReference type="EMBL" id="AL513550">
    <property type="status" value="NOT_ANNOTATED_CDS"/>
    <property type="molecule type" value="Genomic_DNA"/>
</dbReference>
<dbReference type="EMBL" id="CH471051">
    <property type="protein sequence ID" value="EAW48476.1"/>
    <property type="molecule type" value="Genomic_DNA"/>
</dbReference>
<dbReference type="EMBL" id="CH471051">
    <property type="protein sequence ID" value="EAW48477.1"/>
    <property type="molecule type" value="Genomic_DNA"/>
</dbReference>
<dbReference type="EMBL" id="CH471051">
    <property type="protein sequence ID" value="EAW48479.1"/>
    <property type="molecule type" value="Genomic_DNA"/>
</dbReference>
<dbReference type="EMBL" id="CH471051">
    <property type="protein sequence ID" value="EAW48481.1"/>
    <property type="molecule type" value="Genomic_DNA"/>
</dbReference>
<dbReference type="EMBL" id="BC007791">
    <property type="protein sequence ID" value="AAH07791.1"/>
    <property type="status" value="ALT_SEQ"/>
    <property type="molecule type" value="mRNA"/>
</dbReference>
<dbReference type="EMBL" id="BC019074">
    <property type="protein sequence ID" value="AAH19074.1"/>
    <property type="status" value="ALT_SEQ"/>
    <property type="molecule type" value="mRNA"/>
</dbReference>
<dbReference type="EMBL" id="BC052638">
    <property type="protein sequence ID" value="AAH52638.1"/>
    <property type="status" value="ALT_SEQ"/>
    <property type="molecule type" value="mRNA"/>
</dbReference>
<dbReference type="EMBL" id="BC064413">
    <property type="protein sequence ID" value="AAH64413.1"/>
    <property type="status" value="ALT_FRAME"/>
    <property type="molecule type" value="mRNA"/>
</dbReference>
<dbReference type="EMBL" id="BC064640">
    <property type="protein sequence ID" value="AAH64640.1"/>
    <property type="status" value="ALT_SEQ"/>
    <property type="molecule type" value="mRNA"/>
</dbReference>
<dbReference type="EMBL" id="AF161379">
    <property type="protein sequence ID" value="AAF28939.1"/>
    <property type="molecule type" value="mRNA"/>
</dbReference>
<dbReference type="EMBL" id="AF161424">
    <property type="protein sequence ID" value="AAF28984.1"/>
    <property type="molecule type" value="mRNA"/>
</dbReference>
<dbReference type="EMBL" id="AL080186">
    <property type="protein sequence ID" value="CAB45767.1"/>
    <property type="molecule type" value="mRNA"/>
</dbReference>
<dbReference type="CCDS" id="CCDS5043.1">
    <molecule id="Q8TF01-1"/>
</dbReference>
<dbReference type="PIR" id="T12483">
    <property type="entry name" value="T12483"/>
</dbReference>
<dbReference type="RefSeq" id="NP_001309334.1">
    <molecule id="Q8TF01-1"/>
    <property type="nucleotide sequence ID" value="NM_001322405.2"/>
</dbReference>
<dbReference type="RefSeq" id="NP_001309335.1">
    <molecule id="Q8TF01-1"/>
    <property type="nucleotide sequence ID" value="NM_001322406.2"/>
</dbReference>
<dbReference type="RefSeq" id="NP_001309337.1">
    <molecule id="Q8TF01-1"/>
    <property type="nucleotide sequence ID" value="NM_001322408.2"/>
</dbReference>
<dbReference type="RefSeq" id="NP_001309341.1">
    <property type="nucleotide sequence ID" value="NM_001322412.1"/>
</dbReference>
<dbReference type="RefSeq" id="NP_001309342.1">
    <property type="nucleotide sequence ID" value="NM_001322413.1"/>
</dbReference>
<dbReference type="RefSeq" id="NP_001309344.1">
    <property type="nucleotide sequence ID" value="NM_001322415.1"/>
</dbReference>
<dbReference type="RefSeq" id="NP_056306.1">
    <molecule id="Q8TF01-1"/>
    <property type="nucleotide sequence ID" value="NM_015491.3"/>
</dbReference>
<dbReference type="RefSeq" id="NP_116259.2">
    <molecule id="Q8TF01-1"/>
    <property type="nucleotide sequence ID" value="NM_032870.4"/>
</dbReference>
<dbReference type="SMR" id="Q8TF01"/>
<dbReference type="BioGRID" id="117448">
    <property type="interactions" value="54"/>
</dbReference>
<dbReference type="FunCoup" id="Q8TF01">
    <property type="interactions" value="2731"/>
</dbReference>
<dbReference type="IntAct" id="Q8TF01">
    <property type="interactions" value="24"/>
</dbReference>
<dbReference type="MINT" id="Q8TF01"/>
<dbReference type="STRING" id="9606.ENSP00000496842"/>
<dbReference type="GlyGen" id="Q8TF01">
    <property type="glycosylation" value="2 sites, 1 O-linked glycan (1 site)"/>
</dbReference>
<dbReference type="iPTMnet" id="Q8TF01"/>
<dbReference type="PhosphoSitePlus" id="Q8TF01"/>
<dbReference type="BioMuta" id="PNISR"/>
<dbReference type="DMDM" id="152031686"/>
<dbReference type="jPOST" id="Q8TF01"/>
<dbReference type="MassIVE" id="Q8TF01"/>
<dbReference type="PaxDb" id="9606-ENSP00000358242"/>
<dbReference type="PeptideAtlas" id="Q8TF01"/>
<dbReference type="ProteomicsDB" id="74530">
    <molecule id="Q8TF01-1"/>
</dbReference>
<dbReference type="ProteomicsDB" id="74531">
    <molecule id="Q8TF01-2"/>
</dbReference>
<dbReference type="Pumba" id="Q8TF01"/>
<dbReference type="Antibodypedia" id="32003">
    <property type="antibodies" value="33 antibodies from 14 providers"/>
</dbReference>
<dbReference type="DNASU" id="25957"/>
<dbReference type="Ensembl" id="ENST00000369239.10">
    <molecule id="Q8TF01-1"/>
    <property type="protein sequence ID" value="ENSP00000358242.5"/>
    <property type="gene ID" value="ENSG00000132424.17"/>
</dbReference>
<dbReference type="Ensembl" id="ENST00000438806.5">
    <molecule id="Q8TF01-1"/>
    <property type="protein sequence ID" value="ENSP00000387997.1"/>
    <property type="gene ID" value="ENSG00000132424.17"/>
</dbReference>
<dbReference type="Ensembl" id="ENST00000647811.1">
    <molecule id="Q8TF01-1"/>
    <property type="protein sequence ID" value="ENSP00000496842.1"/>
    <property type="gene ID" value="ENSG00000132424.17"/>
</dbReference>
<dbReference type="GeneID" id="25957"/>
<dbReference type="KEGG" id="hsa:25957"/>
<dbReference type="MANE-Select" id="ENST00000369239.10">
    <property type="protein sequence ID" value="ENSP00000358242.5"/>
    <property type="RefSeq nucleotide sequence ID" value="NM_032870.4"/>
    <property type="RefSeq protein sequence ID" value="NP_116259.2"/>
</dbReference>
<dbReference type="UCSC" id="uc003ppo.5">
    <molecule id="Q8TF01-1"/>
    <property type="organism name" value="human"/>
</dbReference>
<dbReference type="AGR" id="HGNC:21222"/>
<dbReference type="CTD" id="25957"/>
<dbReference type="GeneCards" id="PNISR"/>
<dbReference type="HGNC" id="HGNC:21222">
    <property type="gene designation" value="PNISR"/>
</dbReference>
<dbReference type="HPA" id="ENSG00000132424">
    <property type="expression patterns" value="Low tissue specificity"/>
</dbReference>
<dbReference type="MIM" id="616653">
    <property type="type" value="gene"/>
</dbReference>
<dbReference type="neXtProt" id="NX_Q8TF01"/>
<dbReference type="OpenTargets" id="ENSG00000132424"/>
<dbReference type="PharmGKB" id="PA162402984"/>
<dbReference type="VEuPathDB" id="HostDB:ENSG00000132424"/>
<dbReference type="eggNOG" id="ENOG502QUV0">
    <property type="taxonomic scope" value="Eukaryota"/>
</dbReference>
<dbReference type="GeneTree" id="ENSGT00730000111138"/>
<dbReference type="HOGENOM" id="CLU_372518_0_0_1"/>
<dbReference type="InParanoid" id="Q8TF01"/>
<dbReference type="OMA" id="QFNGKRP"/>
<dbReference type="OrthoDB" id="10065820at2759"/>
<dbReference type="PAN-GO" id="Q8TF01">
    <property type="GO annotations" value="2 GO annotations based on evolutionary models"/>
</dbReference>
<dbReference type="PhylomeDB" id="Q8TF01"/>
<dbReference type="TreeFam" id="TF332904"/>
<dbReference type="PathwayCommons" id="Q8TF01"/>
<dbReference type="SignaLink" id="Q8TF01"/>
<dbReference type="BioGRID-ORCS" id="25957">
    <property type="hits" value="349 hits in 1176 CRISPR screens"/>
</dbReference>
<dbReference type="CD-CODE" id="804901D1">
    <property type="entry name" value="Nuclear speckle"/>
</dbReference>
<dbReference type="ChiTaRS" id="PNISR">
    <property type="organism name" value="human"/>
</dbReference>
<dbReference type="GeneWiki" id="PNISR_(gene)"/>
<dbReference type="GenomeRNAi" id="25957"/>
<dbReference type="Pharos" id="Q8TF01">
    <property type="development level" value="Tdark"/>
</dbReference>
<dbReference type="PRO" id="PR:Q8TF01"/>
<dbReference type="Proteomes" id="UP000005640">
    <property type="component" value="Chromosome 6"/>
</dbReference>
<dbReference type="RNAct" id="Q8TF01">
    <property type="molecule type" value="protein"/>
</dbReference>
<dbReference type="Bgee" id="ENSG00000132424">
    <property type="expression patterns" value="Expressed in right hemisphere of cerebellum and 203 other cell types or tissues"/>
</dbReference>
<dbReference type="ExpressionAtlas" id="Q8TF01">
    <property type="expression patterns" value="baseline and differential"/>
</dbReference>
<dbReference type="GO" id="GO:0005829">
    <property type="term" value="C:cytosol"/>
    <property type="evidence" value="ECO:0000314"/>
    <property type="project" value="HPA"/>
</dbReference>
<dbReference type="GO" id="GO:0016607">
    <property type="term" value="C:nuclear speck"/>
    <property type="evidence" value="ECO:0000314"/>
    <property type="project" value="HPA"/>
</dbReference>
<dbReference type="GO" id="GO:0005654">
    <property type="term" value="C:nucleoplasm"/>
    <property type="evidence" value="ECO:0000314"/>
    <property type="project" value="HPA"/>
</dbReference>
<dbReference type="GO" id="GO:0005886">
    <property type="term" value="C:plasma membrane"/>
    <property type="evidence" value="ECO:0000314"/>
    <property type="project" value="HPA"/>
</dbReference>
<dbReference type="GO" id="GO:0048786">
    <property type="term" value="C:presynaptic active zone"/>
    <property type="evidence" value="ECO:0000318"/>
    <property type="project" value="GO_Central"/>
</dbReference>
<dbReference type="GO" id="GO:0003723">
    <property type="term" value="F:RNA binding"/>
    <property type="evidence" value="ECO:0007005"/>
    <property type="project" value="UniProtKB"/>
</dbReference>
<dbReference type="InterPro" id="IPR031937">
    <property type="entry name" value="PNISR"/>
</dbReference>
<dbReference type="PANTHER" id="PTHR31518">
    <property type="entry name" value="ARGININE/SERINE-RICH PROTEIN PNISR"/>
    <property type="match status" value="1"/>
</dbReference>
<dbReference type="Pfam" id="PF15996">
    <property type="entry name" value="PNISR"/>
    <property type="match status" value="1"/>
</dbReference>
<accession>Q8TF01</accession>
<accession>A8K540</accession>
<accession>E1P5D2</accession>
<accession>Q5T064</accession>
<accession>Q5T065</accession>
<accession>Q6P2B4</accession>
<accession>Q6P2N4</accession>
<accession>Q6PJ93</accession>
<accession>Q6PK36</accession>
<accession>Q7Z640</accession>
<accession>Q8N2L1</accession>
<accession>Q8TF00</accession>
<accession>Q96K10</accession>
<accession>Q96SI3</accession>
<accession>Q96SM5</accession>
<accession>Q9P076</accession>
<accession>Q9P0C0</accession>
<accession>Q9Y4N3</accession>
<evidence type="ECO:0000250" key="1">
    <source>
        <dbReference type="UniProtKB" id="A2AJT4"/>
    </source>
</evidence>
<evidence type="ECO:0000255" key="2"/>
<evidence type="ECO:0000256" key="3">
    <source>
        <dbReference type="SAM" id="MobiDB-lite"/>
    </source>
</evidence>
<evidence type="ECO:0000269" key="4">
    <source>
    </source>
</evidence>
<evidence type="ECO:0000303" key="5">
    <source>
    </source>
</evidence>
<evidence type="ECO:0000305" key="6"/>
<evidence type="ECO:0007744" key="7">
    <source>
    </source>
</evidence>
<evidence type="ECO:0007744" key="8">
    <source>
    </source>
</evidence>
<evidence type="ECO:0007744" key="9">
    <source>
    </source>
</evidence>
<evidence type="ECO:0007744" key="10">
    <source>
    </source>
</evidence>
<evidence type="ECO:0007744" key="11">
    <source>
    </source>
</evidence>
<evidence type="ECO:0007744" key="12">
    <source>
    </source>
</evidence>
<proteinExistence type="evidence at protein level"/>
<organism>
    <name type="scientific">Homo sapiens</name>
    <name type="common">Human</name>
    <dbReference type="NCBI Taxonomy" id="9606"/>
    <lineage>
        <taxon>Eukaryota</taxon>
        <taxon>Metazoa</taxon>
        <taxon>Chordata</taxon>
        <taxon>Craniata</taxon>
        <taxon>Vertebrata</taxon>
        <taxon>Euteleostomi</taxon>
        <taxon>Mammalia</taxon>
        <taxon>Eutheria</taxon>
        <taxon>Euarchontoglires</taxon>
        <taxon>Primates</taxon>
        <taxon>Haplorrhini</taxon>
        <taxon>Catarrhini</taxon>
        <taxon>Hominidae</taxon>
        <taxon>Homo</taxon>
    </lineage>
</organism>
<feature type="chain" id="PRO_0000081947" description="Arginine/serine-rich protein PNISR">
    <location>
        <begin position="1"/>
        <end position="805"/>
    </location>
</feature>
<feature type="region of interest" description="Disordered" evidence="3">
    <location>
        <begin position="74"/>
        <end position="331"/>
    </location>
</feature>
<feature type="region of interest" description="Disordered" evidence="3">
    <location>
        <begin position="382"/>
        <end position="805"/>
    </location>
</feature>
<feature type="coiled-coil region" evidence="2">
    <location>
        <begin position="237"/>
        <end position="276"/>
    </location>
</feature>
<feature type="coiled-coil region" evidence="2">
    <location>
        <begin position="429"/>
        <end position="461"/>
    </location>
</feature>
<feature type="coiled-coil region" evidence="2">
    <location>
        <begin position="673"/>
        <end position="703"/>
    </location>
</feature>
<feature type="compositionally biased region" description="Polar residues" evidence="3">
    <location>
        <begin position="74"/>
        <end position="88"/>
    </location>
</feature>
<feature type="compositionally biased region" description="Pro residues" evidence="3">
    <location>
        <begin position="100"/>
        <end position="115"/>
    </location>
</feature>
<feature type="compositionally biased region" description="Pro residues" evidence="3">
    <location>
        <begin position="183"/>
        <end position="195"/>
    </location>
</feature>
<feature type="compositionally biased region" description="Basic and acidic residues" evidence="3">
    <location>
        <begin position="197"/>
        <end position="210"/>
    </location>
</feature>
<feature type="compositionally biased region" description="Basic and acidic residues" evidence="3">
    <location>
        <begin position="238"/>
        <end position="258"/>
    </location>
</feature>
<feature type="compositionally biased region" description="Acidic residues" evidence="3">
    <location>
        <begin position="290"/>
        <end position="299"/>
    </location>
</feature>
<feature type="compositionally biased region" description="Gly residues" evidence="3">
    <location>
        <begin position="384"/>
        <end position="393"/>
    </location>
</feature>
<feature type="compositionally biased region" description="Basic and acidic residues" evidence="3">
    <location>
        <begin position="421"/>
        <end position="463"/>
    </location>
</feature>
<feature type="compositionally biased region" description="Basic and acidic residues" evidence="3">
    <location>
        <begin position="470"/>
        <end position="486"/>
    </location>
</feature>
<feature type="compositionally biased region" description="Basic and acidic residues" evidence="3">
    <location>
        <begin position="494"/>
        <end position="506"/>
    </location>
</feature>
<feature type="compositionally biased region" description="Low complexity" evidence="3">
    <location>
        <begin position="508"/>
        <end position="550"/>
    </location>
</feature>
<feature type="compositionally biased region" description="Basic residues" evidence="3">
    <location>
        <begin position="551"/>
        <end position="579"/>
    </location>
</feature>
<feature type="compositionally biased region" description="Basic residues" evidence="3">
    <location>
        <begin position="587"/>
        <end position="598"/>
    </location>
</feature>
<feature type="compositionally biased region" description="Basic residues" evidence="3">
    <location>
        <begin position="607"/>
        <end position="639"/>
    </location>
</feature>
<feature type="compositionally biased region" description="Basic and acidic residues" evidence="3">
    <location>
        <begin position="659"/>
        <end position="721"/>
    </location>
</feature>
<feature type="compositionally biased region" description="Basic and acidic residues" evidence="3">
    <location>
        <begin position="732"/>
        <end position="753"/>
    </location>
</feature>
<feature type="compositionally biased region" description="Low complexity" evidence="3">
    <location>
        <begin position="754"/>
        <end position="767"/>
    </location>
</feature>
<feature type="compositionally biased region" description="Basic residues" evidence="3">
    <location>
        <begin position="771"/>
        <end position="781"/>
    </location>
</feature>
<feature type="compositionally biased region" description="Basic residues" evidence="3">
    <location>
        <begin position="789"/>
        <end position="805"/>
    </location>
</feature>
<feature type="modified residue" description="Phosphoserine" evidence="10">
    <location>
        <position position="204"/>
    </location>
</feature>
<feature type="modified residue" description="Phosphoserine" evidence="7 9 10">
    <location>
        <position position="211"/>
    </location>
</feature>
<feature type="modified residue" description="Phosphoserine" evidence="8 9 10">
    <location>
        <position position="290"/>
    </location>
</feature>
<feature type="modified residue" description="Phosphoserine" evidence="1">
    <location>
        <position position="304"/>
    </location>
</feature>
<feature type="modified residue" description="Phosphoserine" evidence="9">
    <location>
        <position position="313"/>
    </location>
</feature>
<feature type="modified residue" description="Phosphoserine" evidence="9">
    <location>
        <position position="321"/>
    </location>
</feature>
<feature type="modified residue" description="Phosphoserine" evidence="10">
    <location>
        <position position="465"/>
    </location>
</feature>
<feature type="modified residue" description="Phosphoserine" evidence="10">
    <location>
        <position position="467"/>
    </location>
</feature>
<feature type="modified residue" description="Phosphothreonine" evidence="10">
    <location>
        <position position="485"/>
    </location>
</feature>
<feature type="modified residue" description="Phosphoserine" evidence="9">
    <location>
        <position position="726"/>
    </location>
</feature>
<feature type="cross-link" description="Glycyl lysine isopeptide (Lys-Gly) (interchain with G-Cter in SUMO2)" evidence="11 12">
    <location>
        <position position="218"/>
    </location>
</feature>
<feature type="cross-link" description="Glycyl lysine isopeptide (Lys-Gly) (interchain with G-Cter in SUMO2)" evidence="12">
    <location>
        <position position="496"/>
    </location>
</feature>
<feature type="cross-link" description="Glycyl lysine isopeptide (Lys-Gly) (interchain with G-Cter in SUMO2)" evidence="12">
    <location>
        <position position="703"/>
    </location>
</feature>
<feature type="splice variant" id="VSP_014458" description="In isoform 2." evidence="5">
    <original>APAKQLAQSSALASLTGLGGLGGYGSGDSEDERSDRGSESSDTDDE</original>
    <variation>GIFWCFWFCFSWGILVLMTILAFFCCPCWISTRYLNILLHVLTLKD</variation>
    <location>
        <begin position="368"/>
        <end position="413"/>
    </location>
</feature>
<feature type="splice variant" id="VSP_014459" description="In isoform 2." evidence="5">
    <location>
        <begin position="414"/>
        <end position="805"/>
    </location>
</feature>
<feature type="sequence conflict" description="In Ref. 2; BAB55350." evidence="6" ref="2">
    <original>W</original>
    <variation>R</variation>
    <location>
        <position position="34"/>
    </location>
</feature>
<feature type="sequence conflict" description="In Ref. 2; BAB55440." evidence="6" ref="2">
    <original>K</original>
    <variation>R</variation>
    <location>
        <position position="249"/>
    </location>
</feature>
<feature type="sequence conflict" description="In Ref. 2; BAB55273." evidence="6" ref="2">
    <original>E</original>
    <variation>G</variation>
    <location>
        <position position="327"/>
    </location>
</feature>
<feature type="sequence conflict" description="In Ref. 7; CAB45767." evidence="6" ref="7">
    <original>R</original>
    <variation>G</variation>
    <location>
        <position position="507"/>
    </location>
</feature>
<feature type="sequence conflict" description="In Ref. 1; AAL76163." evidence="6" ref="1">
    <original>S</original>
    <variation>P</variation>
    <location>
        <position position="518"/>
    </location>
</feature>
<feature type="sequence conflict" description="In Ref. 7; CAB45767." evidence="6" ref="7">
    <original>Q</original>
    <variation>R</variation>
    <location>
        <position position="663"/>
    </location>
</feature>
<feature type="sequence conflict" description="In Ref. 1; AAL76163/AAL76164." evidence="6" ref="1">
    <original>V</original>
    <variation>A</variation>
    <location>
        <position position="784"/>
    </location>
</feature>
<feature type="sequence conflict" description="In Ref. 6; AAF28939." evidence="6" ref="6">
    <original>R</original>
    <variation>KSSILFKVFCLIFKKN</variation>
    <location>
        <position position="805"/>
    </location>
</feature>
<sequence length="805" mass="92577">MWDQGGQPWQQWPLNQQQWMQSFQHQQDPSQIDWAALAQAWIAQREASGQQSMVEQPPGMMPNGQDMSTMESGPNNHGNFQGDSNFNRMWQPEWGMHQQPPHPPPDQPWMPPTPGPMDIVPPSEDSNSQDSGEFAPDNRHIFNQNNHNFGGPPDNFAVGPVNQFDYQHGAAFGPPQGGFHPPYWQPGPPGPPAPPQNRRERPSSFRDRQRSPIALPVKQEPPQIDAVKRRTLPAWIREGLEKMEREKQKKLEKERMEQQRSQLSKKEKKATEDAEGGDGPRLPQRSKFDSDEEEEDTENVEAASSGKVTRSPSPVPQEEHSDPEMTEEEKEYQMMLLTKMLLTEILLDVTDEEIYYVAKDAHRKATKAPAKQLAQSSALASLTGLGGLGGYGSGDSEDERSDRGSESSDTDDEELRHRIRQKQEAFWRKEKEQQLLHDKQMEEEKQQTERVTKEMNEFIHKEQNSLSLLEAREADGDVVNEKKRTPNETTSVLEPKKEHKEKEKQGRSRSGSSSSGSSSSNSRTSSTSSTVSSSSYSSSSGSSRTSSRSSSPKRKKRHSRSRSPTIKARRSRSRSYSRRIKIESNRARVKIRDRRRSNRNSIERERRRNRSPSRERRRSRSRSRDRRTNRASRSRSRDRRKIDDQRGNLSGNSHKHKGEAKEQERKKERSRSIDKDRKKKDKEREREQDKRKEKQKREEKDFKFSSQDDRLKRKRESERTFSRSGSISVKIIRHDSRQDSKKSTTKDSKKHSGSDSSGRSSSESPGSSKEKKAKKPKHSRSRSVEKSQRSGKKASRKHKSKSRSR</sequence>
<keyword id="KW-0025">Alternative splicing</keyword>
<keyword id="KW-0175">Coiled coil</keyword>
<keyword id="KW-1017">Isopeptide bond</keyword>
<keyword id="KW-0539">Nucleus</keyword>
<keyword id="KW-0597">Phosphoprotein</keyword>
<keyword id="KW-1267">Proteomics identification</keyword>
<keyword id="KW-1185">Reference proteome</keyword>
<keyword id="KW-0832">Ubl conjugation</keyword>